<sequence>MAAGPAPPPGRPRAQMPHLRKMERVVVSMQDPDQGVKMRSQRLLVTVIPHAVTGSDVVQWLAQKFCVSEEEALHLGAVLVQHGYIYPLRDPRSLMLRPDETPYRFQTPYFWTSTLRPAAELDYAIYLAKKNIRKRGTLVDYEKDCYDRLHKKINHAWDLVLMQAREQLRAAKQRSKGDRLVIACQEQTYWLVNRPPPGAPDVLEQGPGRGSCAASRVLMTKSADFHKREIEYFRKALGRTRVKSSVCLEAYLSFCGQRGPHDPLVSGCLPSNPWISDNDAYWVMNAPTVAAPTKLRVERWGFSFRELLEDPVGRAHFMDFLGKEFSGENLSFWEACEELRYGAQAQVPTLVDAVYEQFLAPGAAHWVNIDSRTMEQTLEGLRQPHRYVLDDAQLHIYMLMKKDSYPRFLKSDMYKALLAEAGIPLEMKRRVFPFTWRPRHSSPSPALLPTPVEPTAACGPGGGDGVA</sequence>
<evidence type="ECO:0000250" key="1"/>
<evidence type="ECO:0000255" key="2">
    <source>
        <dbReference type="PROSITE-ProRule" id="PRU00066"/>
    </source>
</evidence>
<evidence type="ECO:0000255" key="3">
    <source>
        <dbReference type="PROSITE-ProRule" id="PRU00171"/>
    </source>
</evidence>
<evidence type="ECO:0000256" key="4">
    <source>
        <dbReference type="SAM" id="MobiDB-lite"/>
    </source>
</evidence>
<evidence type="ECO:0000269" key="5">
    <source>
    </source>
</evidence>
<evidence type="ECO:0000303" key="6">
    <source>
    </source>
</evidence>
<evidence type="ECO:0000303" key="7">
    <source ref="1"/>
</evidence>
<feature type="chain" id="PRO_0000204210" description="Regulator of G-protein signaling 11">
    <location>
        <begin position="1"/>
        <end position="467"/>
    </location>
</feature>
<feature type="domain" description="DEP" evidence="2">
    <location>
        <begin position="32"/>
        <end position="107"/>
    </location>
</feature>
<feature type="domain" description="G protein gamma">
    <location>
        <begin position="219"/>
        <end position="282"/>
    </location>
</feature>
<feature type="domain" description="RGS" evidence="3">
    <location>
        <begin position="299"/>
        <end position="414"/>
    </location>
</feature>
<feature type="region of interest" description="Disordered" evidence="4">
    <location>
        <begin position="440"/>
        <end position="467"/>
    </location>
</feature>
<feature type="splice variant" id="VSP_046724" description="In isoform 3." evidence="6">
    <location>
        <begin position="1"/>
        <end position="21"/>
    </location>
</feature>
<feature type="splice variant" id="VSP_023497" description="In isoform 2." evidence="7">
    <original>TPYFWTSTLRPAAELDY</original>
    <variation>VRLGGA</variation>
    <location>
        <begin position="107"/>
        <end position="123"/>
    </location>
</feature>
<feature type="sequence variant" id="VAR_061770" description="In dbSNP:rs9806942.">
    <original>V</original>
    <variation>M</variation>
    <location>
        <position position="351"/>
    </location>
</feature>
<feature type="sequence variant" id="VAR_024606" description="In dbSNP:rs739999.">
    <original>M</original>
    <variation>T</variation>
    <location>
        <position position="427"/>
    </location>
</feature>
<feature type="mutagenesis site" description="Diminishes interaction with Gbeta5." evidence="5">
    <original>S</original>
    <variation>A</variation>
    <location>
        <position position="245"/>
    </location>
</feature>
<feature type="mutagenesis site" description="Diminishes interaction with Gbeta5." evidence="5">
    <original>W</original>
    <variation>F</variation>
    <location>
        <position position="274"/>
    </location>
</feature>
<dbReference type="EMBL" id="AB016929">
    <property type="protein sequence ID" value="BAA74751.1"/>
    <property type="molecule type" value="mRNA"/>
</dbReference>
<dbReference type="EMBL" id="AF035153">
    <property type="protein sequence ID" value="AAC69175.1"/>
    <property type="molecule type" value="mRNA"/>
</dbReference>
<dbReference type="EMBL" id="AF035154">
    <property type="protein sequence ID" value="AAC69176.1"/>
    <property type="molecule type" value="mRNA"/>
</dbReference>
<dbReference type="EMBL" id="AE006463">
    <property type="protein sequence ID" value="AAK61221.1"/>
    <property type="molecule type" value="Genomic_DNA"/>
</dbReference>
<dbReference type="EMBL" id="Z69667">
    <property type="protein sequence ID" value="CAI95581.1"/>
    <property type="molecule type" value="Genomic_DNA"/>
</dbReference>
<dbReference type="EMBL" id="AC004754">
    <property type="protein sequence ID" value="CAI95581.1"/>
    <property type="status" value="JOINED"/>
    <property type="molecule type" value="Genomic_DNA"/>
</dbReference>
<dbReference type="EMBL" id="Z69667">
    <property type="protein sequence ID" value="CAI95582.1"/>
    <property type="molecule type" value="Genomic_DNA"/>
</dbReference>
<dbReference type="EMBL" id="AC004754">
    <property type="protein sequence ID" value="CAI95582.1"/>
    <property type="status" value="JOINED"/>
    <property type="molecule type" value="Genomic_DNA"/>
</dbReference>
<dbReference type="EMBL" id="CH471112">
    <property type="protein sequence ID" value="EAW85839.1"/>
    <property type="molecule type" value="Genomic_DNA"/>
</dbReference>
<dbReference type="CCDS" id="CCDS10403.1">
    <molecule id="O94810-3"/>
</dbReference>
<dbReference type="CCDS" id="CCDS42088.1">
    <molecule id="O94810-1"/>
</dbReference>
<dbReference type="CCDS" id="CCDS66884.1">
    <molecule id="O94810-2"/>
</dbReference>
<dbReference type="RefSeq" id="NP_001273414.1">
    <molecule id="O94810-2"/>
    <property type="nucleotide sequence ID" value="NM_001286485.2"/>
</dbReference>
<dbReference type="RefSeq" id="NP_001273415.1">
    <property type="nucleotide sequence ID" value="NM_001286486.1"/>
</dbReference>
<dbReference type="RefSeq" id="NP_003825.1">
    <molecule id="O94810-3"/>
    <property type="nucleotide sequence ID" value="NM_003834.3"/>
</dbReference>
<dbReference type="RefSeq" id="NP_899180.1">
    <molecule id="O94810-1"/>
    <property type="nucleotide sequence ID" value="NM_183337.3"/>
</dbReference>
<dbReference type="SMR" id="O94810"/>
<dbReference type="BioGRID" id="114314">
    <property type="interactions" value="12"/>
</dbReference>
<dbReference type="CORUM" id="O94810"/>
<dbReference type="FunCoup" id="O94810">
    <property type="interactions" value="84"/>
</dbReference>
<dbReference type="IntAct" id="O94810">
    <property type="interactions" value="4"/>
</dbReference>
<dbReference type="STRING" id="9606.ENSP00000380876"/>
<dbReference type="GlyGen" id="O94810">
    <property type="glycosylation" value="1 site"/>
</dbReference>
<dbReference type="iPTMnet" id="O94810"/>
<dbReference type="PhosphoSitePlus" id="O94810"/>
<dbReference type="BioMuta" id="RGS11"/>
<dbReference type="MassIVE" id="O94810"/>
<dbReference type="PaxDb" id="9606-ENSP00000380876"/>
<dbReference type="ProteomicsDB" id="50449">
    <molecule id="O94810-1"/>
</dbReference>
<dbReference type="ProteomicsDB" id="50450">
    <molecule id="O94810-2"/>
</dbReference>
<dbReference type="ProteomicsDB" id="62260"/>
<dbReference type="Antibodypedia" id="22598">
    <property type="antibodies" value="144 antibodies from 27 providers"/>
</dbReference>
<dbReference type="DNASU" id="8786"/>
<dbReference type="Ensembl" id="ENST00000316163.9">
    <molecule id="O94810-3"/>
    <property type="protein sequence ID" value="ENSP00000319069.5"/>
    <property type="gene ID" value="ENSG00000076344.16"/>
</dbReference>
<dbReference type="Ensembl" id="ENST00000359740.6">
    <molecule id="O94810-2"/>
    <property type="protein sequence ID" value="ENSP00000352778.5"/>
    <property type="gene ID" value="ENSG00000076344.16"/>
</dbReference>
<dbReference type="Ensembl" id="ENST00000397770.8">
    <molecule id="O94810-1"/>
    <property type="protein sequence ID" value="ENSP00000380876.3"/>
    <property type="gene ID" value="ENSG00000076344.16"/>
</dbReference>
<dbReference type="GeneID" id="8786"/>
<dbReference type="KEGG" id="hsa:8786"/>
<dbReference type="MANE-Select" id="ENST00000397770.8">
    <property type="protein sequence ID" value="ENSP00000380876.3"/>
    <property type="RefSeq nucleotide sequence ID" value="NM_183337.3"/>
    <property type="RefSeq protein sequence ID" value="NP_899180.1"/>
</dbReference>
<dbReference type="UCSC" id="uc002cgi.3">
    <molecule id="O94810-1"/>
    <property type="organism name" value="human"/>
</dbReference>
<dbReference type="AGR" id="HGNC:9993"/>
<dbReference type="CTD" id="8786"/>
<dbReference type="DisGeNET" id="8786"/>
<dbReference type="GeneCards" id="RGS11"/>
<dbReference type="HGNC" id="HGNC:9993">
    <property type="gene designation" value="RGS11"/>
</dbReference>
<dbReference type="HPA" id="ENSG00000076344">
    <property type="expression patterns" value="Group enriched (brain, pituitary gland)"/>
</dbReference>
<dbReference type="MIM" id="603895">
    <property type="type" value="gene"/>
</dbReference>
<dbReference type="neXtProt" id="NX_O94810"/>
<dbReference type="OpenTargets" id="ENSG00000076344"/>
<dbReference type="PharmGKB" id="PA34363"/>
<dbReference type="VEuPathDB" id="HostDB:ENSG00000076344"/>
<dbReference type="eggNOG" id="KOG3589">
    <property type="taxonomic scope" value="Eukaryota"/>
</dbReference>
<dbReference type="GeneTree" id="ENSGT00940000160198"/>
<dbReference type="HOGENOM" id="CLU_025092_0_0_1"/>
<dbReference type="InParanoid" id="O94810"/>
<dbReference type="OMA" id="WISDEAS"/>
<dbReference type="OrthoDB" id="196547at2759"/>
<dbReference type="PAN-GO" id="O94810">
    <property type="GO annotations" value="6 GO annotations based on evolutionary models"/>
</dbReference>
<dbReference type="PhylomeDB" id="O94810"/>
<dbReference type="TreeFam" id="TF351956"/>
<dbReference type="PathwayCommons" id="O94810"/>
<dbReference type="Reactome" id="R-HSA-418594">
    <property type="pathway name" value="G alpha (i) signalling events"/>
</dbReference>
<dbReference type="Reactome" id="R-HSA-6814122">
    <property type="pathway name" value="Cooperation of PDCL (PhLP1) and TRiC/CCT in G-protein beta folding"/>
</dbReference>
<dbReference type="SignaLink" id="O94810"/>
<dbReference type="BioGRID-ORCS" id="8786">
    <property type="hits" value="20 hits in 1145 CRISPR screens"/>
</dbReference>
<dbReference type="ChiTaRS" id="RGS11">
    <property type="organism name" value="human"/>
</dbReference>
<dbReference type="GeneWiki" id="RGS11"/>
<dbReference type="GenomeRNAi" id="8786"/>
<dbReference type="Pharos" id="O94810">
    <property type="development level" value="Tbio"/>
</dbReference>
<dbReference type="PRO" id="PR:O94810"/>
<dbReference type="Proteomes" id="UP000005640">
    <property type="component" value="Chromosome 16"/>
</dbReference>
<dbReference type="RNAct" id="O94810">
    <property type="molecule type" value="protein"/>
</dbReference>
<dbReference type="Bgee" id="ENSG00000076344">
    <property type="expression patterns" value="Expressed in right hemisphere of cerebellum and 124 other cell types or tissues"/>
</dbReference>
<dbReference type="ExpressionAtlas" id="O94810">
    <property type="expression patterns" value="baseline and differential"/>
</dbReference>
<dbReference type="GO" id="GO:0005737">
    <property type="term" value="C:cytoplasm"/>
    <property type="evidence" value="ECO:0000318"/>
    <property type="project" value="GO_Central"/>
</dbReference>
<dbReference type="GO" id="GO:0043005">
    <property type="term" value="C:neuron projection"/>
    <property type="evidence" value="ECO:0000318"/>
    <property type="project" value="GO_Central"/>
</dbReference>
<dbReference type="GO" id="GO:0005886">
    <property type="term" value="C:plasma membrane"/>
    <property type="evidence" value="ECO:0000318"/>
    <property type="project" value="GO_Central"/>
</dbReference>
<dbReference type="GO" id="GO:0032991">
    <property type="term" value="C:protein-containing complex"/>
    <property type="evidence" value="ECO:0000314"/>
    <property type="project" value="MGI"/>
</dbReference>
<dbReference type="GO" id="GO:0031681">
    <property type="term" value="F:G-protein beta-subunit binding"/>
    <property type="evidence" value="ECO:0000353"/>
    <property type="project" value="UniProtKB"/>
</dbReference>
<dbReference type="GO" id="GO:0005096">
    <property type="term" value="F:GTPase activator activity"/>
    <property type="evidence" value="ECO:0000318"/>
    <property type="project" value="GO_Central"/>
</dbReference>
<dbReference type="GO" id="GO:0003924">
    <property type="term" value="F:GTPase activity"/>
    <property type="evidence" value="ECO:0000304"/>
    <property type="project" value="Reactome"/>
</dbReference>
<dbReference type="GO" id="GO:0007186">
    <property type="term" value="P:G protein-coupled receptor signaling pathway"/>
    <property type="evidence" value="ECO:0000318"/>
    <property type="project" value="GO_Central"/>
</dbReference>
<dbReference type="GO" id="GO:0035556">
    <property type="term" value="P:intracellular signal transduction"/>
    <property type="evidence" value="ECO:0007669"/>
    <property type="project" value="InterPro"/>
</dbReference>
<dbReference type="GO" id="GO:0009968">
    <property type="term" value="P:negative regulation of signal transduction"/>
    <property type="evidence" value="ECO:0007669"/>
    <property type="project" value="UniProtKB-KW"/>
</dbReference>
<dbReference type="GO" id="GO:0008277">
    <property type="term" value="P:regulation of G protein-coupled receptor signaling pathway"/>
    <property type="evidence" value="ECO:0000304"/>
    <property type="project" value="ProtInc"/>
</dbReference>
<dbReference type="CDD" id="cd04450">
    <property type="entry name" value="DEP_RGS7-like"/>
    <property type="match status" value="1"/>
</dbReference>
<dbReference type="CDD" id="cd00068">
    <property type="entry name" value="GGL"/>
    <property type="match status" value="1"/>
</dbReference>
<dbReference type="CDD" id="cd08740">
    <property type="entry name" value="RGS_RGS11"/>
    <property type="match status" value="1"/>
</dbReference>
<dbReference type="FunFam" id="1.10.167.10:FF:000002">
    <property type="entry name" value="Regulator of G-protein signaling 6 isoform 9"/>
    <property type="match status" value="1"/>
</dbReference>
<dbReference type="FunFam" id="1.10.10.10:FF:000329">
    <property type="entry name" value="regulator of G-protein signaling 9 isoform X2"/>
    <property type="match status" value="1"/>
</dbReference>
<dbReference type="Gene3D" id="1.10.1240.60">
    <property type="match status" value="1"/>
</dbReference>
<dbReference type="Gene3D" id="1.10.167.10">
    <property type="entry name" value="Regulator of G-protein Signalling 4, domain 2"/>
    <property type="match status" value="1"/>
</dbReference>
<dbReference type="Gene3D" id="4.10.260.10">
    <property type="entry name" value="Transducin (heterotrimeric G protein), gamma chain"/>
    <property type="match status" value="1"/>
</dbReference>
<dbReference type="Gene3D" id="1.10.10.10">
    <property type="entry name" value="Winged helix-like DNA-binding domain superfamily/Winged helix DNA-binding domain"/>
    <property type="match status" value="1"/>
</dbReference>
<dbReference type="InterPro" id="IPR000591">
    <property type="entry name" value="DEP_dom"/>
</dbReference>
<dbReference type="InterPro" id="IPR015898">
    <property type="entry name" value="G-protein_gamma-like_dom"/>
</dbReference>
<dbReference type="InterPro" id="IPR036284">
    <property type="entry name" value="GGL_sf"/>
</dbReference>
<dbReference type="InterPro" id="IPR016137">
    <property type="entry name" value="RGS"/>
</dbReference>
<dbReference type="InterPro" id="IPR047016">
    <property type="entry name" value="RGS6/7/9/11"/>
</dbReference>
<dbReference type="InterPro" id="IPR047017">
    <property type="entry name" value="RGS6/7/9/11_DHEX_sf"/>
</dbReference>
<dbReference type="InterPro" id="IPR040759">
    <property type="entry name" value="RGS_DHEX"/>
</dbReference>
<dbReference type="InterPro" id="IPR036305">
    <property type="entry name" value="RGS_sf"/>
</dbReference>
<dbReference type="InterPro" id="IPR044926">
    <property type="entry name" value="RGS_subdomain_2"/>
</dbReference>
<dbReference type="InterPro" id="IPR036388">
    <property type="entry name" value="WH-like_DNA-bd_sf"/>
</dbReference>
<dbReference type="InterPro" id="IPR036390">
    <property type="entry name" value="WH_DNA-bd_sf"/>
</dbReference>
<dbReference type="PANTHER" id="PTHR45746">
    <property type="entry name" value="LP21163P"/>
    <property type="match status" value="1"/>
</dbReference>
<dbReference type="PANTHER" id="PTHR45746:SF3">
    <property type="entry name" value="REGULATOR OF G-PROTEIN SIGNALING 11"/>
    <property type="match status" value="1"/>
</dbReference>
<dbReference type="Pfam" id="PF00610">
    <property type="entry name" value="DEP"/>
    <property type="match status" value="1"/>
</dbReference>
<dbReference type="Pfam" id="PF00631">
    <property type="entry name" value="G-gamma"/>
    <property type="match status" value="1"/>
</dbReference>
<dbReference type="Pfam" id="PF00615">
    <property type="entry name" value="RGS"/>
    <property type="match status" value="1"/>
</dbReference>
<dbReference type="Pfam" id="PF18148">
    <property type="entry name" value="RGS_DHEX"/>
    <property type="match status" value="1"/>
</dbReference>
<dbReference type="PRINTS" id="PR01301">
    <property type="entry name" value="RGSPROTEIN"/>
</dbReference>
<dbReference type="SMART" id="SM00049">
    <property type="entry name" value="DEP"/>
    <property type="match status" value="1"/>
</dbReference>
<dbReference type="SMART" id="SM01224">
    <property type="entry name" value="G_gamma"/>
    <property type="match status" value="1"/>
</dbReference>
<dbReference type="SMART" id="SM00224">
    <property type="entry name" value="GGL"/>
    <property type="match status" value="1"/>
</dbReference>
<dbReference type="SMART" id="SM00315">
    <property type="entry name" value="RGS"/>
    <property type="match status" value="1"/>
</dbReference>
<dbReference type="SUPFAM" id="SSF48097">
    <property type="entry name" value="Regulator of G-protein signaling, RGS"/>
    <property type="match status" value="1"/>
</dbReference>
<dbReference type="SUPFAM" id="SSF48670">
    <property type="entry name" value="Transducin (heterotrimeric G protein), gamma chain"/>
    <property type="match status" value="1"/>
</dbReference>
<dbReference type="SUPFAM" id="SSF46785">
    <property type="entry name" value="Winged helix' DNA-binding domain"/>
    <property type="match status" value="1"/>
</dbReference>
<dbReference type="PROSITE" id="PS50186">
    <property type="entry name" value="DEP"/>
    <property type="match status" value="1"/>
</dbReference>
<dbReference type="PROSITE" id="PS50132">
    <property type="entry name" value="RGS"/>
    <property type="match status" value="1"/>
</dbReference>
<proteinExistence type="evidence at protein level"/>
<reference key="1">
    <citation type="submission" date="1998-08" db="EMBL/GenBank/DDBJ databases">
        <title>Homo sapiens regulator of G-protein signaling 11 (RGS11).</title>
        <authorList>
            <person name="Saito T."/>
            <person name="Seki N."/>
            <person name="Miyajima N."/>
        </authorList>
    </citation>
    <scope>NUCLEOTIDE SEQUENCE [MRNA] (ISOFORM 2)</scope>
    <source>
        <tissue>Brain</tissue>
        <tissue>Testis</tissue>
    </source>
</reference>
<reference key="2">
    <citation type="journal article" date="1998" name="Proc. Natl. Acad. Sci. U.S.A.">
        <title>A G protein gamma subunit-like domain shared between RGS11 and other RGS proteins specifies binding to Gbeta5 subunits.</title>
        <authorList>
            <person name="Snow B.E."/>
            <person name="Krumins A.M."/>
            <person name="Brothers G.M."/>
            <person name="Lee S.-F."/>
            <person name="Wall M.A."/>
            <person name="Chung S."/>
            <person name="Mangion J."/>
            <person name="Arya S."/>
            <person name="Gilman A.G."/>
            <person name="Siderovski D.P."/>
        </authorList>
    </citation>
    <scope>NUCLEOTIDE SEQUENCE [MRNA] (ISOFORMS 1 AND 3)</scope>
</reference>
<reference key="3">
    <citation type="journal article" date="2001" name="Hum. Mol. Genet.">
        <title>Sequence, structure and pathology of the fully annotated terminal 2 Mb of the short arm of human chromosome 16.</title>
        <authorList>
            <person name="Daniels R.J."/>
            <person name="Peden J.F."/>
            <person name="Lloyd C."/>
            <person name="Horsley S.W."/>
            <person name="Clark K."/>
            <person name="Tufarelli C."/>
            <person name="Kearney L."/>
            <person name="Buckle V.J."/>
            <person name="Doggett N.A."/>
            <person name="Flint J."/>
            <person name="Higgs D.R."/>
        </authorList>
    </citation>
    <scope>NUCLEOTIDE SEQUENCE [LARGE SCALE GENOMIC DNA]</scope>
</reference>
<reference key="4">
    <citation type="journal article" date="2004" name="Nature">
        <title>The sequence and analysis of duplication-rich human chromosome 16.</title>
        <authorList>
            <person name="Martin J."/>
            <person name="Han C."/>
            <person name="Gordon L.A."/>
            <person name="Terry A."/>
            <person name="Prabhakar S."/>
            <person name="She X."/>
            <person name="Xie G."/>
            <person name="Hellsten U."/>
            <person name="Chan Y.M."/>
            <person name="Altherr M."/>
            <person name="Couronne O."/>
            <person name="Aerts A."/>
            <person name="Bajorek E."/>
            <person name="Black S."/>
            <person name="Blumer H."/>
            <person name="Branscomb E."/>
            <person name="Brown N.C."/>
            <person name="Bruno W.J."/>
            <person name="Buckingham J.M."/>
            <person name="Callen D.F."/>
            <person name="Campbell C.S."/>
            <person name="Campbell M.L."/>
            <person name="Campbell E.W."/>
            <person name="Caoile C."/>
            <person name="Challacombe J.F."/>
            <person name="Chasteen L.A."/>
            <person name="Chertkov O."/>
            <person name="Chi H.C."/>
            <person name="Christensen M."/>
            <person name="Clark L.M."/>
            <person name="Cohn J.D."/>
            <person name="Denys M."/>
            <person name="Detter J.C."/>
            <person name="Dickson M."/>
            <person name="Dimitrijevic-Bussod M."/>
            <person name="Escobar J."/>
            <person name="Fawcett J.J."/>
            <person name="Flowers D."/>
            <person name="Fotopulos D."/>
            <person name="Glavina T."/>
            <person name="Gomez M."/>
            <person name="Gonzales E."/>
            <person name="Goodstein D."/>
            <person name="Goodwin L.A."/>
            <person name="Grady D.L."/>
            <person name="Grigoriev I."/>
            <person name="Groza M."/>
            <person name="Hammon N."/>
            <person name="Hawkins T."/>
            <person name="Haydu L."/>
            <person name="Hildebrand C.E."/>
            <person name="Huang W."/>
            <person name="Israni S."/>
            <person name="Jett J."/>
            <person name="Jewett P.B."/>
            <person name="Kadner K."/>
            <person name="Kimball H."/>
            <person name="Kobayashi A."/>
            <person name="Krawczyk M.-C."/>
            <person name="Leyba T."/>
            <person name="Longmire J.L."/>
            <person name="Lopez F."/>
            <person name="Lou Y."/>
            <person name="Lowry S."/>
            <person name="Ludeman T."/>
            <person name="Manohar C.F."/>
            <person name="Mark G.A."/>
            <person name="McMurray K.L."/>
            <person name="Meincke L.J."/>
            <person name="Morgan J."/>
            <person name="Moyzis R.K."/>
            <person name="Mundt M.O."/>
            <person name="Munk A.C."/>
            <person name="Nandkeshwar R.D."/>
            <person name="Pitluck S."/>
            <person name="Pollard M."/>
            <person name="Predki P."/>
            <person name="Parson-Quintana B."/>
            <person name="Ramirez L."/>
            <person name="Rash S."/>
            <person name="Retterer J."/>
            <person name="Ricke D.O."/>
            <person name="Robinson D.L."/>
            <person name="Rodriguez A."/>
            <person name="Salamov A."/>
            <person name="Saunders E.H."/>
            <person name="Scott D."/>
            <person name="Shough T."/>
            <person name="Stallings R.L."/>
            <person name="Stalvey M."/>
            <person name="Sutherland R.D."/>
            <person name="Tapia R."/>
            <person name="Tesmer J.G."/>
            <person name="Thayer N."/>
            <person name="Thompson L.S."/>
            <person name="Tice H."/>
            <person name="Torney D.C."/>
            <person name="Tran-Gyamfi M."/>
            <person name="Tsai M."/>
            <person name="Ulanovsky L.E."/>
            <person name="Ustaszewska A."/>
            <person name="Vo N."/>
            <person name="White P.S."/>
            <person name="Williams A.L."/>
            <person name="Wills P.L."/>
            <person name="Wu J.-R."/>
            <person name="Wu K."/>
            <person name="Yang J."/>
            <person name="DeJong P."/>
            <person name="Bruce D."/>
            <person name="Doggett N.A."/>
            <person name="Deaven L."/>
            <person name="Schmutz J."/>
            <person name="Grimwood J."/>
            <person name="Richardson P."/>
            <person name="Rokhsar D.S."/>
            <person name="Eichler E.E."/>
            <person name="Gilna P."/>
            <person name="Lucas S.M."/>
            <person name="Myers R.M."/>
            <person name="Rubin E.M."/>
            <person name="Pennacchio L.A."/>
        </authorList>
    </citation>
    <scope>NUCLEOTIDE SEQUENCE [LARGE SCALE GENOMIC DNA]</scope>
</reference>
<reference key="5">
    <citation type="submission" date="2005-07" db="EMBL/GenBank/DDBJ databases">
        <authorList>
            <person name="Mural R.J."/>
            <person name="Istrail S."/>
            <person name="Sutton G.G."/>
            <person name="Florea L."/>
            <person name="Halpern A.L."/>
            <person name="Mobarry C.M."/>
            <person name="Lippert R."/>
            <person name="Walenz B."/>
            <person name="Shatkay H."/>
            <person name="Dew I."/>
            <person name="Miller J.R."/>
            <person name="Flanigan M.J."/>
            <person name="Edwards N.J."/>
            <person name="Bolanos R."/>
            <person name="Fasulo D."/>
            <person name="Halldorsson B.V."/>
            <person name="Hannenhalli S."/>
            <person name="Turner R."/>
            <person name="Yooseph S."/>
            <person name="Lu F."/>
            <person name="Nusskern D.R."/>
            <person name="Shue B.C."/>
            <person name="Zheng X.H."/>
            <person name="Zhong F."/>
            <person name="Delcher A.L."/>
            <person name="Huson D.H."/>
            <person name="Kravitz S.A."/>
            <person name="Mouchard L."/>
            <person name="Reinert K."/>
            <person name="Remington K.A."/>
            <person name="Clark A.G."/>
            <person name="Waterman M.S."/>
            <person name="Eichler E.E."/>
            <person name="Adams M.D."/>
            <person name="Hunkapiller M.W."/>
            <person name="Myers E.W."/>
            <person name="Venter J.C."/>
        </authorList>
    </citation>
    <scope>NUCLEOTIDE SEQUENCE [LARGE SCALE GENOMIC DNA]</scope>
</reference>
<reference key="6">
    <citation type="journal article" date="1999" name="Proc. Natl. Acad. Sci. U.S.A.">
        <title>Fidelity of G protein beta-subunit association by the G protein gamma-subunit-like domains of RGS6, RGS7, and RGS11.</title>
        <authorList>
            <person name="Snow B.E."/>
            <person name="Betts L."/>
            <person name="Mangion J."/>
            <person name="Sondek J."/>
            <person name="Siderovski D.P."/>
        </authorList>
    </citation>
    <scope>INTERACTION WITH GBETA5</scope>
    <scope>MUTAGENESIS OF SER-245 AND TRP-274</scope>
</reference>
<gene>
    <name type="primary">RGS11</name>
</gene>
<protein>
    <recommendedName>
        <fullName>Regulator of G-protein signaling 11</fullName>
        <shortName>RGS11</shortName>
    </recommendedName>
</protein>
<name>RGS11_HUMAN</name>
<organism>
    <name type="scientific">Homo sapiens</name>
    <name type="common">Human</name>
    <dbReference type="NCBI Taxonomy" id="9606"/>
    <lineage>
        <taxon>Eukaryota</taxon>
        <taxon>Metazoa</taxon>
        <taxon>Chordata</taxon>
        <taxon>Craniata</taxon>
        <taxon>Vertebrata</taxon>
        <taxon>Euteleostomi</taxon>
        <taxon>Mammalia</taxon>
        <taxon>Eutheria</taxon>
        <taxon>Euarchontoglires</taxon>
        <taxon>Primates</taxon>
        <taxon>Haplorrhini</taxon>
        <taxon>Catarrhini</taxon>
        <taxon>Hominidae</taxon>
        <taxon>Homo</taxon>
    </lineage>
</organism>
<comment type="function">
    <text>Inhibits signal transduction by increasing the GTPase activity of G protein alpha subunits thereby driving them into their inactive GDP-bound form.</text>
</comment>
<comment type="subunit">
    <text evidence="1">Heterodimer with Gbeta5. Interacts with RGS7BP, leading to regulate the subcellular location of the heterodimer formed with Gbeta5 (By similarity).</text>
</comment>
<comment type="alternative products">
    <event type="alternative splicing"/>
    <isoform>
        <id>O94810-1</id>
        <name>1</name>
        <sequence type="displayed"/>
    </isoform>
    <isoform>
        <id>O94810-2</id>
        <name>2</name>
        <sequence type="described" ref="VSP_023497"/>
    </isoform>
    <isoform>
        <id>O94810-3</id>
        <name>3</name>
        <sequence type="described" ref="VSP_046724"/>
    </isoform>
</comment>
<accession>O94810</accession>
<accession>O75883</accession>
<accession>Q4TT71</accession>
<accession>Q4TT72</accession>
<keyword id="KW-0025">Alternative splicing</keyword>
<keyword id="KW-1185">Reference proteome</keyword>
<keyword id="KW-0734">Signal transduction inhibitor</keyword>